<reference key="1">
    <citation type="submission" date="2006-09" db="EMBL/GenBank/DDBJ databases">
        <authorList>
            <consortium name="The Klebsiella pneumonia Genome Sequencing Project"/>
            <person name="McClelland M."/>
            <person name="Sanderson E.K."/>
            <person name="Spieth J."/>
            <person name="Clifton W.S."/>
            <person name="Latreille P."/>
            <person name="Sabo A."/>
            <person name="Pepin K."/>
            <person name="Bhonagiri V."/>
            <person name="Porwollik S."/>
            <person name="Ali J."/>
            <person name="Wilson R.K."/>
        </authorList>
    </citation>
    <scope>NUCLEOTIDE SEQUENCE [LARGE SCALE GENOMIC DNA]</scope>
    <source>
        <strain>ATCC 700721 / MGH 78578</strain>
    </source>
</reference>
<protein>
    <recommendedName>
        <fullName evidence="1">NADH-quinone oxidoreductase subunit H</fullName>
        <ecNumber evidence="1">7.1.1.-</ecNumber>
    </recommendedName>
    <alternativeName>
        <fullName evidence="1">NADH dehydrogenase I subunit H</fullName>
    </alternativeName>
    <alternativeName>
        <fullName evidence="1">NDH-1 subunit H</fullName>
    </alternativeName>
</protein>
<feature type="chain" id="PRO_1000067747" description="NADH-quinone oxidoreductase subunit H">
    <location>
        <begin position="1"/>
        <end position="325"/>
    </location>
</feature>
<feature type="transmembrane region" description="Helical" evidence="1">
    <location>
        <begin position="11"/>
        <end position="31"/>
    </location>
</feature>
<feature type="transmembrane region" description="Helical" evidence="1">
    <location>
        <begin position="81"/>
        <end position="101"/>
    </location>
</feature>
<feature type="transmembrane region" description="Helical" evidence="1">
    <location>
        <begin position="114"/>
        <end position="134"/>
    </location>
</feature>
<feature type="transmembrane region" description="Helical" evidence="1">
    <location>
        <begin position="154"/>
        <end position="174"/>
    </location>
</feature>
<feature type="transmembrane region" description="Helical" evidence="1">
    <location>
        <begin position="186"/>
        <end position="206"/>
    </location>
</feature>
<feature type="transmembrane region" description="Helical" evidence="1">
    <location>
        <begin position="237"/>
        <end position="257"/>
    </location>
</feature>
<feature type="transmembrane region" description="Helical" evidence="1">
    <location>
        <begin position="265"/>
        <end position="285"/>
    </location>
</feature>
<feature type="transmembrane region" description="Helical" evidence="1">
    <location>
        <begin position="304"/>
        <end position="324"/>
    </location>
</feature>
<gene>
    <name evidence="1" type="primary">nuoH</name>
    <name type="ordered locus">KPN78578_26280</name>
    <name type="ORF">KPN_02672</name>
</gene>
<evidence type="ECO:0000255" key="1">
    <source>
        <dbReference type="HAMAP-Rule" id="MF_01350"/>
    </source>
</evidence>
<name>NUOH_KLEP7</name>
<proteinExistence type="inferred from homology"/>
<accession>A6TBW8</accession>
<keyword id="KW-0997">Cell inner membrane</keyword>
<keyword id="KW-1003">Cell membrane</keyword>
<keyword id="KW-0472">Membrane</keyword>
<keyword id="KW-0520">NAD</keyword>
<keyword id="KW-0874">Quinone</keyword>
<keyword id="KW-1278">Translocase</keyword>
<keyword id="KW-0812">Transmembrane</keyword>
<keyword id="KW-1133">Transmembrane helix</keyword>
<keyword id="KW-0830">Ubiquinone</keyword>
<organism>
    <name type="scientific">Klebsiella pneumoniae subsp. pneumoniae (strain ATCC 700721 / MGH 78578)</name>
    <dbReference type="NCBI Taxonomy" id="272620"/>
    <lineage>
        <taxon>Bacteria</taxon>
        <taxon>Pseudomonadati</taxon>
        <taxon>Pseudomonadota</taxon>
        <taxon>Gammaproteobacteria</taxon>
        <taxon>Enterobacterales</taxon>
        <taxon>Enterobacteriaceae</taxon>
        <taxon>Klebsiella/Raoultella group</taxon>
        <taxon>Klebsiella</taxon>
        <taxon>Klebsiella pneumoniae complex</taxon>
    </lineage>
</organism>
<dbReference type="EC" id="7.1.1.-" evidence="1"/>
<dbReference type="EMBL" id="CP000647">
    <property type="protein sequence ID" value="ABR78089.1"/>
    <property type="molecule type" value="Genomic_DNA"/>
</dbReference>
<dbReference type="RefSeq" id="WP_002913156.1">
    <property type="nucleotide sequence ID" value="NC_009648.1"/>
</dbReference>
<dbReference type="SMR" id="A6TBW8"/>
<dbReference type="STRING" id="272620.KPN_02672"/>
<dbReference type="PaxDb" id="272620-KPN_02672"/>
<dbReference type="EnsemblBacteria" id="ABR78089">
    <property type="protein sequence ID" value="ABR78089"/>
    <property type="gene ID" value="KPN_02672"/>
</dbReference>
<dbReference type="GeneID" id="93272076"/>
<dbReference type="KEGG" id="kpn:KPN_02672"/>
<dbReference type="HOGENOM" id="CLU_015134_0_1_6"/>
<dbReference type="Proteomes" id="UP000000265">
    <property type="component" value="Chromosome"/>
</dbReference>
<dbReference type="GO" id="GO:0005886">
    <property type="term" value="C:plasma membrane"/>
    <property type="evidence" value="ECO:0007669"/>
    <property type="project" value="UniProtKB-SubCell"/>
</dbReference>
<dbReference type="GO" id="GO:0003954">
    <property type="term" value="F:NADH dehydrogenase activity"/>
    <property type="evidence" value="ECO:0007669"/>
    <property type="project" value="TreeGrafter"/>
</dbReference>
<dbReference type="GO" id="GO:0016655">
    <property type="term" value="F:oxidoreductase activity, acting on NAD(P)H, quinone or similar compound as acceptor"/>
    <property type="evidence" value="ECO:0007669"/>
    <property type="project" value="UniProtKB-UniRule"/>
</dbReference>
<dbReference type="GO" id="GO:0048038">
    <property type="term" value="F:quinone binding"/>
    <property type="evidence" value="ECO:0007669"/>
    <property type="project" value="UniProtKB-KW"/>
</dbReference>
<dbReference type="GO" id="GO:0009060">
    <property type="term" value="P:aerobic respiration"/>
    <property type="evidence" value="ECO:0007669"/>
    <property type="project" value="TreeGrafter"/>
</dbReference>
<dbReference type="HAMAP" id="MF_01350">
    <property type="entry name" value="NDH1_NuoH"/>
    <property type="match status" value="1"/>
</dbReference>
<dbReference type="InterPro" id="IPR001694">
    <property type="entry name" value="NADH_UbQ_OxRdtase_su1/FPO"/>
</dbReference>
<dbReference type="InterPro" id="IPR018086">
    <property type="entry name" value="NADH_UbQ_OxRdtase_su1_CS"/>
</dbReference>
<dbReference type="NCBIfam" id="NF004740">
    <property type="entry name" value="PRK06076.1-1"/>
    <property type="match status" value="1"/>
</dbReference>
<dbReference type="NCBIfam" id="NF004741">
    <property type="entry name" value="PRK06076.1-2"/>
    <property type="match status" value="1"/>
</dbReference>
<dbReference type="PANTHER" id="PTHR11432">
    <property type="entry name" value="NADH DEHYDROGENASE SUBUNIT 1"/>
    <property type="match status" value="1"/>
</dbReference>
<dbReference type="PANTHER" id="PTHR11432:SF3">
    <property type="entry name" value="NADH-UBIQUINONE OXIDOREDUCTASE CHAIN 1"/>
    <property type="match status" value="1"/>
</dbReference>
<dbReference type="Pfam" id="PF00146">
    <property type="entry name" value="NADHdh"/>
    <property type="match status" value="1"/>
</dbReference>
<dbReference type="PROSITE" id="PS00667">
    <property type="entry name" value="COMPLEX1_ND1_1"/>
    <property type="match status" value="1"/>
</dbReference>
<dbReference type="PROSITE" id="PS00668">
    <property type="entry name" value="COMPLEX1_ND1_2"/>
    <property type="match status" value="1"/>
</dbReference>
<sequence>MSWLTPDLIDILLSILKAVVILLVVVTCGAFMSFGERRLLGLFQNRYGPNRVGWGGSLQLVADMIKMFFKEDWIPRFSDRVIFTLAPVIAFTSLLLAFAIVPVSPTWVVADLNIGILFFLMMAGLAVYAVLFAGWSSNNKYSLLGAMRASAQTLSYEVFLGLSLMGVVAQAGSFNMTDIVNNQAHLWNVIPQFFGFVTFAIAGVAVCHRHPFDQPEAEQELADGYHIEYSGMKFGLFFVGEYIGIVTVSALIVTLFFGGWNGPWLPPFIWFALKTAFFMMMFILIRASLPRPRYDQVMSFGWKVCLPLTLVNLLVTAAVILWQAQ</sequence>
<comment type="function">
    <text evidence="1">NDH-1 shuttles electrons from NADH, via FMN and iron-sulfur (Fe-S) centers, to quinones in the respiratory chain. The immediate electron acceptor for the enzyme in this species is believed to be ubiquinone. Couples the redox reaction to proton translocation (for every two electrons transferred, four hydrogen ions are translocated across the cytoplasmic membrane), and thus conserves the redox energy in a proton gradient. This subunit may bind ubiquinone.</text>
</comment>
<comment type="catalytic activity">
    <reaction evidence="1">
        <text>a quinone + NADH + 5 H(+)(in) = a quinol + NAD(+) + 4 H(+)(out)</text>
        <dbReference type="Rhea" id="RHEA:57888"/>
        <dbReference type="ChEBI" id="CHEBI:15378"/>
        <dbReference type="ChEBI" id="CHEBI:24646"/>
        <dbReference type="ChEBI" id="CHEBI:57540"/>
        <dbReference type="ChEBI" id="CHEBI:57945"/>
        <dbReference type="ChEBI" id="CHEBI:132124"/>
    </reaction>
</comment>
<comment type="subunit">
    <text evidence="1">NDH-1 is composed of 13 different subunits. Subunits NuoA, H, J, K, L, M, N constitute the membrane sector of the complex.</text>
</comment>
<comment type="subcellular location">
    <subcellularLocation>
        <location evidence="1">Cell inner membrane</location>
        <topology evidence="1">Multi-pass membrane protein</topology>
    </subcellularLocation>
</comment>
<comment type="similarity">
    <text evidence="1">Belongs to the complex I subunit 1 family.</text>
</comment>